<comment type="function">
    <text evidence="1">Site-specific tyrosine recombinase, which acts by catalyzing the cutting and rejoining of the recombining DNA molecules. The XerC-XerD complex is essential to convert dimers of the bacterial chromosome into monomers to permit their segregation at cell division. It also contributes to the segregational stability of plasmids.</text>
</comment>
<comment type="subunit">
    <text evidence="1">Forms a cyclic heterotetrameric complex composed of two molecules of XerC and two molecules of XerD.</text>
</comment>
<comment type="subcellular location">
    <subcellularLocation>
        <location evidence="1">Cytoplasm</location>
    </subcellularLocation>
</comment>
<comment type="similarity">
    <text evidence="1">Belongs to the 'phage' integrase family. XerC subfamily.</text>
</comment>
<dbReference type="EMBL" id="CP000157">
    <property type="protein sequence ID" value="ABC63089.1"/>
    <property type="molecule type" value="Genomic_DNA"/>
</dbReference>
<dbReference type="RefSeq" id="WP_011413925.1">
    <property type="nucleotide sequence ID" value="NC_007722.1"/>
</dbReference>
<dbReference type="SMR" id="Q2NB52"/>
<dbReference type="STRING" id="314225.ELI_04985"/>
<dbReference type="KEGG" id="eli:ELI_04985"/>
<dbReference type="eggNOG" id="COG4974">
    <property type="taxonomic scope" value="Bacteria"/>
</dbReference>
<dbReference type="HOGENOM" id="CLU_027562_9_0_5"/>
<dbReference type="OrthoDB" id="9801717at2"/>
<dbReference type="Proteomes" id="UP000008808">
    <property type="component" value="Chromosome"/>
</dbReference>
<dbReference type="GO" id="GO:0005737">
    <property type="term" value="C:cytoplasm"/>
    <property type="evidence" value="ECO:0007669"/>
    <property type="project" value="UniProtKB-SubCell"/>
</dbReference>
<dbReference type="GO" id="GO:0003677">
    <property type="term" value="F:DNA binding"/>
    <property type="evidence" value="ECO:0007669"/>
    <property type="project" value="UniProtKB-KW"/>
</dbReference>
<dbReference type="GO" id="GO:0009037">
    <property type="term" value="F:tyrosine-based site-specific recombinase activity"/>
    <property type="evidence" value="ECO:0007669"/>
    <property type="project" value="UniProtKB-UniRule"/>
</dbReference>
<dbReference type="GO" id="GO:0051301">
    <property type="term" value="P:cell division"/>
    <property type="evidence" value="ECO:0007669"/>
    <property type="project" value="UniProtKB-KW"/>
</dbReference>
<dbReference type="GO" id="GO:0007059">
    <property type="term" value="P:chromosome segregation"/>
    <property type="evidence" value="ECO:0007669"/>
    <property type="project" value="UniProtKB-UniRule"/>
</dbReference>
<dbReference type="GO" id="GO:0006313">
    <property type="term" value="P:DNA transposition"/>
    <property type="evidence" value="ECO:0007669"/>
    <property type="project" value="UniProtKB-UniRule"/>
</dbReference>
<dbReference type="CDD" id="cd00798">
    <property type="entry name" value="INT_XerDC_C"/>
    <property type="match status" value="1"/>
</dbReference>
<dbReference type="Gene3D" id="1.10.150.130">
    <property type="match status" value="1"/>
</dbReference>
<dbReference type="Gene3D" id="1.10.443.10">
    <property type="entry name" value="Intergrase catalytic core"/>
    <property type="match status" value="1"/>
</dbReference>
<dbReference type="HAMAP" id="MF_01808">
    <property type="entry name" value="Recomb_XerC_XerD"/>
    <property type="match status" value="1"/>
</dbReference>
<dbReference type="InterPro" id="IPR044068">
    <property type="entry name" value="CB"/>
</dbReference>
<dbReference type="InterPro" id="IPR011010">
    <property type="entry name" value="DNA_brk_join_enz"/>
</dbReference>
<dbReference type="InterPro" id="IPR013762">
    <property type="entry name" value="Integrase-like_cat_sf"/>
</dbReference>
<dbReference type="InterPro" id="IPR002104">
    <property type="entry name" value="Integrase_catalytic"/>
</dbReference>
<dbReference type="InterPro" id="IPR010998">
    <property type="entry name" value="Integrase_recombinase_N"/>
</dbReference>
<dbReference type="InterPro" id="IPR004107">
    <property type="entry name" value="Integrase_SAM-like_N"/>
</dbReference>
<dbReference type="InterPro" id="IPR023009">
    <property type="entry name" value="Tyrosine_recombinase_XerC/XerD"/>
</dbReference>
<dbReference type="InterPro" id="IPR050090">
    <property type="entry name" value="Tyrosine_recombinase_XerCD"/>
</dbReference>
<dbReference type="NCBIfam" id="NF001399">
    <property type="entry name" value="PRK00283.1"/>
    <property type="match status" value="1"/>
</dbReference>
<dbReference type="PANTHER" id="PTHR30349">
    <property type="entry name" value="PHAGE INTEGRASE-RELATED"/>
    <property type="match status" value="1"/>
</dbReference>
<dbReference type="PANTHER" id="PTHR30349:SF90">
    <property type="entry name" value="TYROSINE RECOMBINASE XERD"/>
    <property type="match status" value="1"/>
</dbReference>
<dbReference type="Pfam" id="PF02899">
    <property type="entry name" value="Phage_int_SAM_1"/>
    <property type="match status" value="1"/>
</dbReference>
<dbReference type="Pfam" id="PF00589">
    <property type="entry name" value="Phage_integrase"/>
    <property type="match status" value="1"/>
</dbReference>
<dbReference type="SUPFAM" id="SSF56349">
    <property type="entry name" value="DNA breaking-rejoining enzymes"/>
    <property type="match status" value="1"/>
</dbReference>
<dbReference type="SUPFAM" id="SSF47823">
    <property type="entry name" value="lambda integrase-like, N-terminal domain"/>
    <property type="match status" value="1"/>
</dbReference>
<dbReference type="PROSITE" id="PS51900">
    <property type="entry name" value="CB"/>
    <property type="match status" value="1"/>
</dbReference>
<dbReference type="PROSITE" id="PS51898">
    <property type="entry name" value="TYR_RECOMBINASE"/>
    <property type="match status" value="1"/>
</dbReference>
<evidence type="ECO:0000255" key="1">
    <source>
        <dbReference type="HAMAP-Rule" id="MF_01808"/>
    </source>
</evidence>
<evidence type="ECO:0000255" key="2">
    <source>
        <dbReference type="PROSITE-ProRule" id="PRU01246"/>
    </source>
</evidence>
<evidence type="ECO:0000255" key="3">
    <source>
        <dbReference type="PROSITE-ProRule" id="PRU01248"/>
    </source>
</evidence>
<keyword id="KW-0131">Cell cycle</keyword>
<keyword id="KW-0132">Cell division</keyword>
<keyword id="KW-0159">Chromosome partition</keyword>
<keyword id="KW-0963">Cytoplasm</keyword>
<keyword id="KW-0229">DNA integration</keyword>
<keyword id="KW-0233">DNA recombination</keyword>
<keyword id="KW-0238">DNA-binding</keyword>
<keyword id="KW-1185">Reference proteome</keyword>
<sequence>MAKASAAIEEFLAMLAAERGAAANTLAAYRRDLEGAEALAGDLATARRPALSRLGSAWSDLAPATVARKASALRQFYGFLVDEGLREDDPSSALPRPTMRRPLPKTLSHKEVERLFEQAEREAETSRPLPVRLLALIELLYGSGLRATELVSLPVAAVPRDAPFLTVTGKGGVARMVPVSGRAREALQSWMGLRGSDSPYLFPSRKAHITRVRLFQMLKELAVRADLNPDKVSPHVLRHAFATHLLEGGADLRVLQTLLGHADISTTQIYTHVDAARLVALVNERHPLSARAAGKRSTLAEKRTED</sequence>
<accession>Q2NB52</accession>
<gene>
    <name evidence="1" type="primary">xerC</name>
    <name type="ordered locus">ELI_04985</name>
</gene>
<protein>
    <recommendedName>
        <fullName evidence="1">Tyrosine recombinase XerC</fullName>
    </recommendedName>
</protein>
<reference key="1">
    <citation type="journal article" date="2009" name="J. Bacteriol.">
        <title>Complete genome sequence of Erythrobacter litoralis HTCC2594.</title>
        <authorList>
            <person name="Oh H.M."/>
            <person name="Giovannoni S.J."/>
            <person name="Ferriera S."/>
            <person name="Johnson J."/>
            <person name="Cho J.C."/>
        </authorList>
    </citation>
    <scope>NUCLEOTIDE SEQUENCE [LARGE SCALE GENOMIC DNA]</scope>
    <source>
        <strain>HTCC2594</strain>
    </source>
</reference>
<organism>
    <name type="scientific">Erythrobacter litoralis (strain HTCC2594)</name>
    <dbReference type="NCBI Taxonomy" id="314225"/>
    <lineage>
        <taxon>Bacteria</taxon>
        <taxon>Pseudomonadati</taxon>
        <taxon>Pseudomonadota</taxon>
        <taxon>Alphaproteobacteria</taxon>
        <taxon>Sphingomonadales</taxon>
        <taxon>Erythrobacteraceae</taxon>
        <taxon>Erythrobacter/Porphyrobacter group</taxon>
        <taxon>Erythrobacter</taxon>
    </lineage>
</organism>
<feature type="chain" id="PRO_1000070004" description="Tyrosine recombinase XerC">
    <location>
        <begin position="1"/>
        <end position="306"/>
    </location>
</feature>
<feature type="domain" description="Core-binding (CB)" evidence="3">
    <location>
        <begin position="2"/>
        <end position="81"/>
    </location>
</feature>
<feature type="domain" description="Tyr recombinase" evidence="2">
    <location>
        <begin position="102"/>
        <end position="283"/>
    </location>
</feature>
<feature type="active site" evidence="1">
    <location>
        <position position="146"/>
    </location>
</feature>
<feature type="active site" evidence="1">
    <location>
        <position position="170"/>
    </location>
</feature>
<feature type="active site" evidence="1">
    <location>
        <position position="235"/>
    </location>
</feature>
<feature type="active site" evidence="1">
    <location>
        <position position="238"/>
    </location>
</feature>
<feature type="active site" evidence="1">
    <location>
        <position position="261"/>
    </location>
</feature>
<feature type="active site" description="O-(3'-phospho-DNA)-tyrosine intermediate" evidence="1">
    <location>
        <position position="270"/>
    </location>
</feature>
<proteinExistence type="inferred from homology"/>
<name>XERC_ERYLH</name>